<dbReference type="EMBL" id="L43967">
    <property type="protein sequence ID" value="AAC71395.2"/>
    <property type="molecule type" value="Genomic_DNA"/>
</dbReference>
<dbReference type="EMBL" id="U01733">
    <property type="protein sequence ID" value="AAD10543.1"/>
    <property type="molecule type" value="Genomic_DNA"/>
</dbReference>
<dbReference type="PIR" id="E64219">
    <property type="entry name" value="E64219"/>
</dbReference>
<dbReference type="RefSeq" id="WP_009885861.1">
    <property type="nucleotide sequence ID" value="NC_000908.2"/>
</dbReference>
<dbReference type="SMR" id="P47422"/>
<dbReference type="FunCoup" id="P47422">
    <property type="interactions" value="216"/>
</dbReference>
<dbReference type="STRING" id="243273.MG_176"/>
<dbReference type="GeneID" id="88282308"/>
<dbReference type="KEGG" id="mge:MG_176"/>
<dbReference type="eggNOG" id="COG0100">
    <property type="taxonomic scope" value="Bacteria"/>
</dbReference>
<dbReference type="HOGENOM" id="CLU_072439_5_3_14"/>
<dbReference type="InParanoid" id="P47422"/>
<dbReference type="OrthoDB" id="9806415at2"/>
<dbReference type="Proteomes" id="UP000000807">
    <property type="component" value="Chromosome"/>
</dbReference>
<dbReference type="GO" id="GO:0022627">
    <property type="term" value="C:cytosolic small ribosomal subunit"/>
    <property type="evidence" value="ECO:0000318"/>
    <property type="project" value="GO_Central"/>
</dbReference>
<dbReference type="GO" id="GO:0019843">
    <property type="term" value="F:rRNA binding"/>
    <property type="evidence" value="ECO:0007669"/>
    <property type="project" value="UniProtKB-UniRule"/>
</dbReference>
<dbReference type="GO" id="GO:0003735">
    <property type="term" value="F:structural constituent of ribosome"/>
    <property type="evidence" value="ECO:0000318"/>
    <property type="project" value="GO_Central"/>
</dbReference>
<dbReference type="GO" id="GO:0006412">
    <property type="term" value="P:translation"/>
    <property type="evidence" value="ECO:0000318"/>
    <property type="project" value="GO_Central"/>
</dbReference>
<dbReference type="FunFam" id="3.30.420.80:FF:000010">
    <property type="entry name" value="30S ribosomal protein S11"/>
    <property type="match status" value="1"/>
</dbReference>
<dbReference type="Gene3D" id="3.30.420.80">
    <property type="entry name" value="Ribosomal protein S11"/>
    <property type="match status" value="1"/>
</dbReference>
<dbReference type="HAMAP" id="MF_01310">
    <property type="entry name" value="Ribosomal_uS11"/>
    <property type="match status" value="1"/>
</dbReference>
<dbReference type="InterPro" id="IPR001971">
    <property type="entry name" value="Ribosomal_uS11"/>
</dbReference>
<dbReference type="InterPro" id="IPR019981">
    <property type="entry name" value="Ribosomal_uS11_bac-type"/>
</dbReference>
<dbReference type="InterPro" id="IPR018102">
    <property type="entry name" value="Ribosomal_uS11_CS"/>
</dbReference>
<dbReference type="InterPro" id="IPR036967">
    <property type="entry name" value="Ribosomal_uS11_sf"/>
</dbReference>
<dbReference type="NCBIfam" id="NF003698">
    <property type="entry name" value="PRK05309.1"/>
    <property type="match status" value="1"/>
</dbReference>
<dbReference type="NCBIfam" id="TIGR03632">
    <property type="entry name" value="uS11_bact"/>
    <property type="match status" value="1"/>
</dbReference>
<dbReference type="PANTHER" id="PTHR11759">
    <property type="entry name" value="40S RIBOSOMAL PROTEIN S14/30S RIBOSOMAL PROTEIN S11"/>
    <property type="match status" value="1"/>
</dbReference>
<dbReference type="Pfam" id="PF00411">
    <property type="entry name" value="Ribosomal_S11"/>
    <property type="match status" value="1"/>
</dbReference>
<dbReference type="PIRSF" id="PIRSF002131">
    <property type="entry name" value="Ribosomal_S11"/>
    <property type="match status" value="1"/>
</dbReference>
<dbReference type="SUPFAM" id="SSF53137">
    <property type="entry name" value="Translational machinery components"/>
    <property type="match status" value="1"/>
</dbReference>
<dbReference type="PROSITE" id="PS00054">
    <property type="entry name" value="RIBOSOMAL_S11"/>
    <property type="match status" value="1"/>
</dbReference>
<accession>P47422</accession>
<organism>
    <name type="scientific">Mycoplasma genitalium (strain ATCC 33530 / DSM 19775 / NCTC 10195 / G37)</name>
    <name type="common">Mycoplasmoides genitalium</name>
    <dbReference type="NCBI Taxonomy" id="243273"/>
    <lineage>
        <taxon>Bacteria</taxon>
        <taxon>Bacillati</taxon>
        <taxon>Mycoplasmatota</taxon>
        <taxon>Mycoplasmoidales</taxon>
        <taxon>Mycoplasmoidaceae</taxon>
        <taxon>Mycoplasmoides</taxon>
    </lineage>
</organism>
<reference key="1">
    <citation type="journal article" date="1995" name="Science">
        <title>The minimal gene complement of Mycoplasma genitalium.</title>
        <authorList>
            <person name="Fraser C.M."/>
            <person name="Gocayne J.D."/>
            <person name="White O."/>
            <person name="Adams M.D."/>
            <person name="Clayton R.A."/>
            <person name="Fleischmann R.D."/>
            <person name="Bult C.J."/>
            <person name="Kerlavage A.R."/>
            <person name="Sutton G.G."/>
            <person name="Kelley J.M."/>
            <person name="Fritchman J.L."/>
            <person name="Weidman J.F."/>
            <person name="Small K.V."/>
            <person name="Sandusky M."/>
            <person name="Fuhrmann J.L."/>
            <person name="Nguyen D.T."/>
            <person name="Utterback T.R."/>
            <person name="Saudek D.M."/>
            <person name="Phillips C.A."/>
            <person name="Merrick J.M."/>
            <person name="Tomb J.-F."/>
            <person name="Dougherty B.A."/>
            <person name="Bott K.F."/>
            <person name="Hu P.-C."/>
            <person name="Lucier T.S."/>
            <person name="Peterson S.N."/>
            <person name="Smith H.O."/>
            <person name="Hutchison C.A. III"/>
            <person name="Venter J.C."/>
        </authorList>
    </citation>
    <scope>NUCLEOTIDE SEQUENCE [LARGE SCALE GENOMIC DNA]</scope>
    <source>
        <strain>ATCC 33530 / DSM 19775 / NCTC 10195 / G37</strain>
    </source>
</reference>
<reference key="2">
    <citation type="journal article" date="1993" name="J. Bacteriol.">
        <title>A survey of the Mycoplasma genitalium genome by using random sequencing.</title>
        <authorList>
            <person name="Peterson S.N."/>
            <person name="Hu P.-C."/>
            <person name="Bott K.F."/>
            <person name="Hutchison C.A. III"/>
        </authorList>
    </citation>
    <scope>NUCLEOTIDE SEQUENCE [GENOMIC DNA] OF 1-82</scope>
    <source>
        <strain>ATCC 33530 / DSM 19775 / NCTC 10195 / G37</strain>
    </source>
</reference>
<reference key="3">
    <citation type="journal article" date="2006" name="Proc. Natl. Acad. Sci. U.S.A.">
        <title>Essential genes of a minimal bacterium.</title>
        <authorList>
            <person name="Glass J.I."/>
            <person name="Assad-Garcia N."/>
            <person name="Alperovich N."/>
            <person name="Yooseph S."/>
            <person name="Lewis M.R."/>
            <person name="Maruf M."/>
            <person name="Hutchison C.A. III"/>
            <person name="Smith H.O."/>
            <person name="Venter J.C."/>
        </authorList>
    </citation>
    <scope>SEQUENCE REVISION TO C-TERMINUS</scope>
    <scope>DISRUPTION PHENOTYPE</scope>
    <source>
        <strain>ATCC 33530 / DSM 19775 / NCTC 10195 / G37</strain>
    </source>
</reference>
<name>RS11_MYCGE</name>
<evidence type="ECO:0000255" key="1">
    <source>
        <dbReference type="HAMAP-Rule" id="MF_01310"/>
    </source>
</evidence>
<evidence type="ECO:0000269" key="2">
    <source>
    </source>
</evidence>
<evidence type="ECO:0000305" key="3"/>
<comment type="function">
    <text evidence="1">Located on the platform of the 30S subunit, it bridges several disparate RNA helices of the 16S rRNA. Forms part of the Shine-Dalgarno cleft in the 70S ribosome.</text>
</comment>
<comment type="subunit">
    <text evidence="1">Part of the 30S ribosomal subunit. Interacts with proteins S7 and S18. Binds to IF-3.</text>
</comment>
<comment type="disruption phenotype">
    <text evidence="2">Probably essential, it was not disrupted in a global transposon mutagenesis study.</text>
</comment>
<comment type="similarity">
    <text evidence="1">Belongs to the universal ribosomal protein uS11 family.</text>
</comment>
<proteinExistence type="inferred from homology"/>
<keyword id="KW-1185">Reference proteome</keyword>
<keyword id="KW-0687">Ribonucleoprotein</keyword>
<keyword id="KW-0689">Ribosomal protein</keyword>
<keyword id="KW-0694">RNA-binding</keyword>
<keyword id="KW-0699">rRNA-binding</keyword>
<gene>
    <name evidence="1" type="primary">rpsK</name>
    <name evidence="1" type="synonym">rps11</name>
    <name type="ordered locus">MG176</name>
</gene>
<protein>
    <recommendedName>
        <fullName evidence="1">Small ribosomal subunit protein uS11</fullName>
    </recommendedName>
    <alternativeName>
        <fullName evidence="3">30S ribosomal protein S11</fullName>
    </alternativeName>
</protein>
<sequence length="121" mass="12819">MAKKKKINVPSGLIHVSCSPNNTIVSATDPSGNVLCWASSGTVGFKGFRKKTPYSAGVAADKVAKTVKEMGMGSVKMYLKGTGRGKDTTIRSFANAGITITEINEKTPIPHNGCKPPKRPR</sequence>
<feature type="chain" id="PRO_0000123177" description="Small ribosomal subunit protein uS11">
    <location>
        <begin position="1"/>
        <end position="121"/>
    </location>
</feature>